<organism>
    <name type="scientific">Mus musculus</name>
    <name type="common">Mouse</name>
    <dbReference type="NCBI Taxonomy" id="10090"/>
    <lineage>
        <taxon>Eukaryota</taxon>
        <taxon>Metazoa</taxon>
        <taxon>Chordata</taxon>
        <taxon>Craniata</taxon>
        <taxon>Vertebrata</taxon>
        <taxon>Euteleostomi</taxon>
        <taxon>Mammalia</taxon>
        <taxon>Eutheria</taxon>
        <taxon>Euarchontoglires</taxon>
        <taxon>Glires</taxon>
        <taxon>Rodentia</taxon>
        <taxon>Myomorpha</taxon>
        <taxon>Muroidea</taxon>
        <taxon>Muridae</taxon>
        <taxon>Murinae</taxon>
        <taxon>Mus</taxon>
        <taxon>Mus</taxon>
    </lineage>
</organism>
<name>PIGF_MOUSE</name>
<sequence>MKDTDIKRLLYTNLLCVFSIFLSIFIPSFFVDNFSVLEAHLTWLCICSASVTTVNLLSYLVVKPNVSSKRSSLSHKVTRALKCCVCFLMSCFLLHIIFVLYGAPLIELVLETFLFAVVLSTFTTVPCLCLLGPNLKAWLRVFSRNGVTSIWENSLQITTISSFTGAWLGAFPIPLDWERPWQVWPISCTLGATFGYVAGLVISPLWIYWNRKQLTYKNN</sequence>
<protein>
    <recommendedName>
        <fullName evidence="4">GPI ethanolamine phosphate transferase, stabilizing subunit</fullName>
    </recommendedName>
    <alternativeName>
        <fullName evidence="4">GPI ethanolamine phosphate transferase 2, stabilizing subunit</fullName>
    </alternativeName>
    <alternativeName>
        <fullName evidence="4">GPI ethanolamine phosphate transferase 3, stabilizing subunit</fullName>
    </alternativeName>
    <alternativeName>
        <fullName>Phosphatidylinositol-glycan biosynthesis class F protein</fullName>
        <shortName>PIG-F</shortName>
    </alternativeName>
</protein>
<keyword id="KW-0256">Endoplasmic reticulum</keyword>
<keyword id="KW-0337">GPI-anchor biosynthesis</keyword>
<keyword id="KW-0472">Membrane</keyword>
<keyword id="KW-1185">Reference proteome</keyword>
<keyword id="KW-0812">Transmembrane</keyword>
<keyword id="KW-1133">Transmembrane helix</keyword>
<dbReference type="EMBL" id="D50264">
    <property type="protein sequence ID" value="BAA08818.1"/>
    <property type="molecule type" value="mRNA"/>
</dbReference>
<dbReference type="CCDS" id="CCDS29011.1"/>
<dbReference type="RefSeq" id="NP_001398330.1">
    <property type="nucleotide sequence ID" value="NM_001411401.1"/>
</dbReference>
<dbReference type="RefSeq" id="NP_001398331.1">
    <property type="nucleotide sequence ID" value="NM_001411402.1"/>
</dbReference>
<dbReference type="RefSeq" id="NP_001398332.1">
    <property type="nucleotide sequence ID" value="NM_001411403.1"/>
</dbReference>
<dbReference type="RefSeq" id="NP_001398333.1">
    <property type="nucleotide sequence ID" value="NM_001411404.1"/>
</dbReference>
<dbReference type="RefSeq" id="NP_032864.1">
    <property type="nucleotide sequence ID" value="NM_008838.2"/>
</dbReference>
<dbReference type="RefSeq" id="XP_006523894.1">
    <property type="nucleotide sequence ID" value="XM_006523831.2"/>
</dbReference>
<dbReference type="BioGRID" id="202156">
    <property type="interactions" value="2"/>
</dbReference>
<dbReference type="FunCoup" id="O09101">
    <property type="interactions" value="696"/>
</dbReference>
<dbReference type="STRING" id="10090.ENSMUSP00000024957"/>
<dbReference type="PaxDb" id="10090-ENSMUSP00000024957"/>
<dbReference type="Antibodypedia" id="29978">
    <property type="antibodies" value="98 antibodies from 24 providers"/>
</dbReference>
<dbReference type="DNASU" id="18701"/>
<dbReference type="Ensembl" id="ENSMUST00000024957.7">
    <property type="protein sequence ID" value="ENSMUSP00000024957.7"/>
    <property type="gene ID" value="ENSMUSG00000024145.7"/>
</dbReference>
<dbReference type="GeneID" id="18701"/>
<dbReference type="KEGG" id="mmu:18701"/>
<dbReference type="UCSC" id="uc008dun.1">
    <property type="organism name" value="mouse"/>
</dbReference>
<dbReference type="AGR" id="MGI:99462"/>
<dbReference type="CTD" id="5281"/>
<dbReference type="MGI" id="MGI:99462">
    <property type="gene designation" value="Pigf"/>
</dbReference>
<dbReference type="VEuPathDB" id="HostDB:ENSMUSG00000024145"/>
<dbReference type="eggNOG" id="KOG3144">
    <property type="taxonomic scope" value="Eukaryota"/>
</dbReference>
<dbReference type="GeneTree" id="ENSGT00390000016617"/>
<dbReference type="HOGENOM" id="CLU_1261153_0_0_1"/>
<dbReference type="InParanoid" id="O09101"/>
<dbReference type="OMA" id="DHEIKAM"/>
<dbReference type="OrthoDB" id="17366at2759"/>
<dbReference type="PhylomeDB" id="O09101"/>
<dbReference type="TreeFam" id="TF323878"/>
<dbReference type="Reactome" id="R-MMU-162710">
    <property type="pathway name" value="Synthesis of glycosylphosphatidylinositol (GPI)"/>
</dbReference>
<dbReference type="UniPathway" id="UPA00196"/>
<dbReference type="BioGRID-ORCS" id="18701">
    <property type="hits" value="7 hits in 80 CRISPR screens"/>
</dbReference>
<dbReference type="ChiTaRS" id="Pigf">
    <property type="organism name" value="mouse"/>
</dbReference>
<dbReference type="PRO" id="PR:O09101"/>
<dbReference type="Proteomes" id="UP000000589">
    <property type="component" value="Chromosome 17"/>
</dbReference>
<dbReference type="RNAct" id="O09101">
    <property type="molecule type" value="protein"/>
</dbReference>
<dbReference type="Bgee" id="ENSMUSG00000024145">
    <property type="expression patterns" value="Expressed in spermatid and 249 other cell types or tissues"/>
</dbReference>
<dbReference type="GO" id="GO:0005789">
    <property type="term" value="C:endoplasmic reticulum membrane"/>
    <property type="evidence" value="ECO:0000314"/>
    <property type="project" value="UniProtKB"/>
</dbReference>
<dbReference type="GO" id="GO:0051377">
    <property type="term" value="F:mannose-ethanolamine phosphotransferase activity"/>
    <property type="evidence" value="ECO:0000304"/>
    <property type="project" value="MGI"/>
</dbReference>
<dbReference type="GO" id="GO:0006506">
    <property type="term" value="P:GPI anchor biosynthetic process"/>
    <property type="evidence" value="ECO:0000314"/>
    <property type="project" value="UniProtKB"/>
</dbReference>
<dbReference type="InterPro" id="IPR009580">
    <property type="entry name" value="GPI_biosynthesis_protein_Pig-F"/>
</dbReference>
<dbReference type="Pfam" id="PF06699">
    <property type="entry name" value="PIG-F"/>
    <property type="match status" value="1"/>
</dbReference>
<feature type="chain" id="PRO_0000191760" description="GPI ethanolamine phosphate transferase, stabilizing subunit">
    <location>
        <begin position="1"/>
        <end position="219"/>
    </location>
</feature>
<feature type="transmembrane region" description="Helical" evidence="2">
    <location>
        <begin position="11"/>
        <end position="31"/>
    </location>
</feature>
<feature type="transmembrane region" description="Helical" evidence="2">
    <location>
        <begin position="42"/>
        <end position="62"/>
    </location>
</feature>
<feature type="transmembrane region" description="Helical" evidence="2">
    <location>
        <begin position="86"/>
        <end position="106"/>
    </location>
</feature>
<feature type="transmembrane region" description="Helical" evidence="2">
    <location>
        <begin position="113"/>
        <end position="133"/>
    </location>
</feature>
<feature type="transmembrane region" description="Helical" evidence="2">
    <location>
        <begin position="155"/>
        <end position="175"/>
    </location>
</feature>
<feature type="transmembrane region" description="Helical" evidence="2">
    <location>
        <begin position="189"/>
        <end position="209"/>
    </location>
</feature>
<reference key="1">
    <citation type="journal article" date="1996" name="Genomics">
        <title>Cloning and characterization of the murine GPI anchor synthesis gene Pigf, a homologue of the human PIGF gene.</title>
        <authorList>
            <person name="Ohishi K."/>
            <person name="Kurimoto Y."/>
            <person name="Inoue N."/>
            <person name="Endo Y."/>
            <person name="Takeda J."/>
            <person name="Kinoshita T."/>
        </authorList>
    </citation>
    <scope>NUCLEOTIDE SEQUENCE [MRNA]</scope>
    <source>
        <strain>C57BL/6J</strain>
        <tissue>Testis</tissue>
    </source>
</reference>
<reference key="2">
    <citation type="journal article" date="2000" name="J. Biol. Chem.">
        <title>Requirement of PIG-F and PIG-O for transferring phosphoethanolamine to the third mannose in glycosylphosphatidylinositol.</title>
        <authorList>
            <person name="Hong Y."/>
            <person name="Maeda Y."/>
            <person name="Watanabe R."/>
            <person name="Inoue N."/>
            <person name="Ohishi K."/>
            <person name="Kinoshita T."/>
        </authorList>
    </citation>
    <scope>FUNCTION</scope>
    <scope>SUBUNIT</scope>
    <scope>SUBCELLULAR LOCATION</scope>
    <source>
        <tissue>Testis</tissue>
    </source>
</reference>
<comment type="function">
    <text evidence="3">Stabilizing subunit of the ethanolamine phosphate transferase 3 and ethanolamine phosphate transferase 2 complexes that sequentially transfer an ethanolamine phosphate (EtNP) from a phosphatidylethanolamine (PE) to the 6-OH position of the third alpha-1,2-linked mannose and the second alpha-1,6-linked mannose of the alpha-D-Man-(1-&gt;2)-alpha-D-Man-(1-&gt;6)-2-PEtn-alpha-D-Man-(1-&gt;4)-alpha-D-GlcN-(1-&gt;6)-(1-radyl,2-acyl-sn-glycero-3-phospho)-2-acyl-inositol (also termed H6) intermediate to generate a 6-PEtn-alpha-D-Man-(1-&gt;2)-6-PEtn-alpha-D-Man-(1-&gt;6)-2-PEtn-alpha-D-Man-(1-&gt;4)-alpha-D-GlcN-(1-&gt;6)-(1-radyl,2-acyl-sn-glycero-3-phospho)-2-acyl-inositol (also termed H8) (PubMed:10781593). Participates in the tenth and eleventh steps of the glycosylphosphatidylinositol-anchor biosynthesis, in association with PIGO and PIGG, respectively (PubMed:10781593).</text>
</comment>
<comment type="pathway">
    <text evidence="3">Glycolipid biosynthesis; glycosylphosphatidylinositol-anchor biosynthesis.</text>
</comment>
<comment type="subunit">
    <text evidence="1 3">Part of the ethanolamine phosphate transferase 3 complex composed by PIGO and PIGF (PubMed:10781593). Part of the ethanolamine phosphate transferase 2 complex with PIGG (By similarity). PIGF is required to stabilize PIGG and PIGO (PubMed:10781593).</text>
</comment>
<comment type="subcellular location">
    <subcellularLocation>
        <location evidence="3">Endoplasmic reticulum membrane</location>
        <topology evidence="3">Multi-pass membrane protein</topology>
    </subcellularLocation>
</comment>
<comment type="similarity">
    <text evidence="4">Belongs to the PIGF family.</text>
</comment>
<proteinExistence type="evidence at protein level"/>
<gene>
    <name evidence="5" type="primary">Pigf</name>
</gene>
<evidence type="ECO:0000250" key="1">
    <source>
        <dbReference type="UniProtKB" id="Q07326"/>
    </source>
</evidence>
<evidence type="ECO:0000255" key="2"/>
<evidence type="ECO:0000269" key="3">
    <source>
    </source>
</evidence>
<evidence type="ECO:0000305" key="4"/>
<evidence type="ECO:0000312" key="5">
    <source>
        <dbReference type="MGI" id="MGI:99462"/>
    </source>
</evidence>
<accession>O09101</accession>